<name>MUKB_SALG2</name>
<dbReference type="EMBL" id="AM933173">
    <property type="protein sequence ID" value="CAR36826.1"/>
    <property type="molecule type" value="Genomic_DNA"/>
</dbReference>
<dbReference type="RefSeq" id="WP_000572745.1">
    <property type="nucleotide sequence ID" value="NC_011274.1"/>
</dbReference>
<dbReference type="SMR" id="B5R8L1"/>
<dbReference type="KEGG" id="seg:SG0936"/>
<dbReference type="HOGENOM" id="CLU_004430_0_0_6"/>
<dbReference type="Proteomes" id="UP000008321">
    <property type="component" value="Chromosome"/>
</dbReference>
<dbReference type="GO" id="GO:0005737">
    <property type="term" value="C:cytoplasm"/>
    <property type="evidence" value="ECO:0007669"/>
    <property type="project" value="UniProtKB-UniRule"/>
</dbReference>
<dbReference type="GO" id="GO:0009295">
    <property type="term" value="C:nucleoid"/>
    <property type="evidence" value="ECO:0007669"/>
    <property type="project" value="UniProtKB-SubCell"/>
</dbReference>
<dbReference type="GO" id="GO:0005524">
    <property type="term" value="F:ATP binding"/>
    <property type="evidence" value="ECO:0007669"/>
    <property type="project" value="UniProtKB-UniRule"/>
</dbReference>
<dbReference type="GO" id="GO:0003677">
    <property type="term" value="F:DNA binding"/>
    <property type="evidence" value="ECO:0007669"/>
    <property type="project" value="UniProtKB-UniRule"/>
</dbReference>
<dbReference type="GO" id="GO:0051301">
    <property type="term" value="P:cell division"/>
    <property type="evidence" value="ECO:0007669"/>
    <property type="project" value="UniProtKB-KW"/>
</dbReference>
<dbReference type="GO" id="GO:0030261">
    <property type="term" value="P:chromosome condensation"/>
    <property type="evidence" value="ECO:0007669"/>
    <property type="project" value="UniProtKB-KW"/>
</dbReference>
<dbReference type="GO" id="GO:0007059">
    <property type="term" value="P:chromosome segregation"/>
    <property type="evidence" value="ECO:0007669"/>
    <property type="project" value="UniProtKB-UniRule"/>
</dbReference>
<dbReference type="GO" id="GO:0006260">
    <property type="term" value="P:DNA replication"/>
    <property type="evidence" value="ECO:0007669"/>
    <property type="project" value="UniProtKB-UniRule"/>
</dbReference>
<dbReference type="FunFam" id="3.30.70.3500:FF:000001">
    <property type="entry name" value="Chromosome partition protein MukB"/>
    <property type="match status" value="1"/>
</dbReference>
<dbReference type="FunFam" id="3.40.1140.10:FF:000001">
    <property type="entry name" value="Chromosome partition protein MukB"/>
    <property type="match status" value="1"/>
</dbReference>
<dbReference type="FunFam" id="3.40.1140.10:FF:000002">
    <property type="entry name" value="Chromosome partition protein MukB"/>
    <property type="match status" value="1"/>
</dbReference>
<dbReference type="Gene3D" id="1.10.287.1490">
    <property type="match status" value="1"/>
</dbReference>
<dbReference type="Gene3D" id="1.20.58.850">
    <property type="match status" value="1"/>
</dbReference>
<dbReference type="Gene3D" id="3.40.1140.10">
    <property type="match status" value="2"/>
</dbReference>
<dbReference type="Gene3D" id="1.20.5.420">
    <property type="entry name" value="Immunoglobulin FC, subunit C"/>
    <property type="match status" value="1"/>
</dbReference>
<dbReference type="Gene3D" id="3.30.70.3500">
    <property type="entry name" value="MukB, hinge domain"/>
    <property type="match status" value="1"/>
</dbReference>
<dbReference type="HAMAP" id="MF_01800">
    <property type="entry name" value="MukB"/>
    <property type="match status" value="1"/>
</dbReference>
<dbReference type="InterPro" id="IPR012090">
    <property type="entry name" value="MukB"/>
</dbReference>
<dbReference type="InterPro" id="IPR050308">
    <property type="entry name" value="MukB/SMC"/>
</dbReference>
<dbReference type="InterPro" id="IPR032520">
    <property type="entry name" value="MukB_hinge"/>
</dbReference>
<dbReference type="InterPro" id="IPR042501">
    <property type="entry name" value="MukB_hinge_sf"/>
</dbReference>
<dbReference type="InterPro" id="IPR007406">
    <property type="entry name" value="MukB_N_dom"/>
</dbReference>
<dbReference type="InterPro" id="IPR027417">
    <property type="entry name" value="P-loop_NTPase"/>
</dbReference>
<dbReference type="NCBIfam" id="NF003422">
    <property type="entry name" value="PRK04863.1"/>
    <property type="match status" value="1"/>
</dbReference>
<dbReference type="PANTHER" id="PTHR42963">
    <property type="entry name" value="CHROMOSOME PARTITION PROTEIN MUKB"/>
    <property type="match status" value="1"/>
</dbReference>
<dbReference type="PANTHER" id="PTHR42963:SF1">
    <property type="entry name" value="DUF4476 DOMAIN-CONTAINING PROTEIN"/>
    <property type="match status" value="1"/>
</dbReference>
<dbReference type="Pfam" id="PF04310">
    <property type="entry name" value="MukB"/>
    <property type="match status" value="1"/>
</dbReference>
<dbReference type="Pfam" id="PF16330">
    <property type="entry name" value="MukB_hinge"/>
    <property type="match status" value="1"/>
</dbReference>
<dbReference type="Pfam" id="PF13558">
    <property type="entry name" value="SbcC_Walker_B"/>
    <property type="match status" value="1"/>
</dbReference>
<dbReference type="PIRSF" id="PIRSF005246">
    <property type="entry name" value="MukB"/>
    <property type="match status" value="1"/>
</dbReference>
<dbReference type="SUPFAM" id="SSF52540">
    <property type="entry name" value="P-loop containing nucleoside triphosphate hydrolases"/>
    <property type="match status" value="2"/>
</dbReference>
<proteinExistence type="inferred from homology"/>
<gene>
    <name evidence="1" type="primary">mukB</name>
    <name type="ordered locus">SG0936</name>
</gene>
<evidence type="ECO:0000255" key="1">
    <source>
        <dbReference type="HAMAP-Rule" id="MF_01800"/>
    </source>
</evidence>
<evidence type="ECO:0000256" key="2">
    <source>
        <dbReference type="SAM" id="MobiDB-lite"/>
    </source>
</evidence>
<organism>
    <name type="scientific">Salmonella gallinarum (strain 287/91 / NCTC 13346)</name>
    <dbReference type="NCBI Taxonomy" id="550538"/>
    <lineage>
        <taxon>Bacteria</taxon>
        <taxon>Pseudomonadati</taxon>
        <taxon>Pseudomonadota</taxon>
        <taxon>Gammaproteobacteria</taxon>
        <taxon>Enterobacterales</taxon>
        <taxon>Enterobacteriaceae</taxon>
        <taxon>Salmonella</taxon>
    </lineage>
</organism>
<comment type="function">
    <text evidence="1">Plays a central role in chromosome condensation, segregation and cell cycle progression. Functions as a homodimer, which is essential for chromosome partition. Involved in negative DNA supercoiling in vivo, and by this means organize and compact chromosomes. May achieve or facilitate chromosome segregation by condensation DNA from both sides of a centrally located replisome during cell division.</text>
</comment>
<comment type="subunit">
    <text evidence="1">Homodimerization via its hinge domain. Binds to DNA via its C-terminal region. Interacts, and probably forms a ternary complex, with MukE and MukF via its C-terminal region. The complex formation is stimulated by calcium or magnesium. Interacts with tubulin-related protein FtsZ.</text>
</comment>
<comment type="subcellular location">
    <subcellularLocation>
        <location evidence="1">Cytoplasm</location>
        <location evidence="1">Nucleoid</location>
    </subcellularLocation>
    <text evidence="1">Restricted to the nucleoid region.</text>
</comment>
<comment type="domain">
    <text evidence="1">The hinge domain, which separates the large intramolecular coiled coil regions, allows the homodimerization, forming a V-shaped homodimer.</text>
</comment>
<comment type="similarity">
    <text evidence="1">Belongs to the SMC family. MukB subfamily.</text>
</comment>
<sequence length="1488" mass="170040">MIERGKFRSLTLINWNGFFARTFDLDELVTTLSGGNGAGKSTTMAAFVTALIPDLTLLHFRNTTEAGATSGSRDKGLHGKLKAGVCYSMLDTINSRHQRVVVGVRLQQVAGRDRKVDIKPFAIQGLPMSVQPTQLVTETLNERQARVLSLAELKDKLDEMEGVQFKQFNSITDYHSLMFDLGIIARRLRSASDRSKFYRLIEASLYGGISSAITRSLRDYLLPENSGVRKAFQDMEAALRENRLTLEAIRVTQSDRDLFKHLISEATDYVAADYMRHANERRVHLDQALAFRRELYTSRKQLAAEQYKHVDMARELGEHNGAEGSLEADYQAASDHLNLVQTALRQQEKIERYEADLEELQIRLEEQNEVVAEAAEMQDENEARAEAAELEVDELKSQLADYQQALDVQQTRAIQYNQAISALARAKELCHLPDLTPESAAEWLDTFQAKEQEATEKLLSLEQKMSVAQTAHSQFEQAYQLVAAINGPLARSEAWDVARELLRDGVNQRHLAEQVQPLRMRLSELEQRLREQQEAERLLAEFCKRQGKNFDIDELEALHQELEARIASLSESVSSASEQRMALRQEQEQLQSRIQHLMQRAPVWLAAQNSLNQLSEQCGEEFTSSQEVTEYLQQLLEREREAIVERDEVGARKNAVDEEIERLSQPGGAEDQRLNALAERFGGVLLSEIYDDVSLEDAPYFSALYGPSRHAIVVPDLSQIAEQLEGLTDCPEDLYLIEGDPQSFDDSVFSVDELEKAVVVKIADRQWRYSRFPSLPIFGRAARENRIESLHAEREVLSERFATLSFDVQKTQRLHQAFSRFIGSHLSVAFEDDPEAEIRRLNGRRVELERALATHESDNQQQRLQFEQAKEGVSALNRLLPRLNLLADETLADRVDEIQERLDEAQEAARFVQQYGNQLAKLEPVVSVLQSDPEQFEQLKEDYAWSQQMQRDARQQAFALAEVVERRAHFSYSDSAEMLSGNSDLNEKLRQRLEQAEAERTRAREALRSHAAQLSQYSQVLASLKSSYDTKKELLNDLQRELQDIGVRADSGAEERARQRRDELHAQLSNNRSRRNQLEKALTFCEAEMENLTRKLRKLERDYHEMREQVVTAKAGWCAVMRMVKDNGVERRLHRRELAYLSADELRSMSDKALGALRLAVADNEHLRDVLRLSEDPKRPERKIQFFVAVYQHLRERIRQDIIRTDDPVEAIEQMEIELSRLTEELTSREQKLAISSRSVANIIRKTIQREQNRIRMLNQGLQSVSFGQVNSVRLNVNVRETHATLLDVLSEQQEQHQDLFNSNRLTFSEALAKLYQRLNPQIDMGQRTPQTIGEELLDYRNYLEMEVEVNRGSDGWLRAESGALSTGEAIGTGMSILVIVVQSWEDEARRLRGKDISPCRLLFLDEAARLDARSIATLFELCERLQMQLIIAAPENISPEKGTTYKLVRKVFQNTEHVHVVGLRGFAPQLPETLPGTQTEDTPSEAS</sequence>
<keyword id="KW-0067">ATP-binding</keyword>
<keyword id="KW-0131">Cell cycle</keyword>
<keyword id="KW-0132">Cell division</keyword>
<keyword id="KW-0159">Chromosome partition</keyword>
<keyword id="KW-0175">Coiled coil</keyword>
<keyword id="KW-0963">Cytoplasm</keyword>
<keyword id="KW-0226">DNA condensation</keyword>
<keyword id="KW-0238">DNA-binding</keyword>
<keyword id="KW-0547">Nucleotide-binding</keyword>
<feature type="chain" id="PRO_1000187484" description="Chromosome partition protein MukB">
    <location>
        <begin position="1"/>
        <end position="1488"/>
    </location>
</feature>
<feature type="region of interest" description="Flexible hinge" evidence="1">
    <location>
        <begin position="666"/>
        <end position="783"/>
    </location>
</feature>
<feature type="region of interest" description="Disordered" evidence="2">
    <location>
        <begin position="1049"/>
        <end position="1074"/>
    </location>
</feature>
<feature type="coiled-coil region" evidence="1">
    <location>
        <begin position="326"/>
        <end position="418"/>
    </location>
</feature>
<feature type="coiled-coil region" evidence="1">
    <location>
        <begin position="444"/>
        <end position="472"/>
    </location>
</feature>
<feature type="coiled-coil region" evidence="1">
    <location>
        <begin position="509"/>
        <end position="602"/>
    </location>
</feature>
<feature type="coiled-coil region" evidence="1">
    <location>
        <begin position="835"/>
        <end position="923"/>
    </location>
</feature>
<feature type="coiled-coil region" evidence="1">
    <location>
        <begin position="977"/>
        <end position="1116"/>
    </location>
</feature>
<feature type="coiled-coil region" evidence="1">
    <location>
        <begin position="1209"/>
        <end position="1265"/>
    </location>
</feature>
<feature type="compositionally biased region" description="Basic and acidic residues" evidence="2">
    <location>
        <begin position="1051"/>
        <end position="1065"/>
    </location>
</feature>
<feature type="binding site" evidence="1">
    <location>
        <begin position="34"/>
        <end position="41"/>
    </location>
    <ligand>
        <name>ATP</name>
        <dbReference type="ChEBI" id="CHEBI:30616"/>
    </ligand>
</feature>
<reference key="1">
    <citation type="journal article" date="2008" name="Genome Res.">
        <title>Comparative genome analysis of Salmonella enteritidis PT4 and Salmonella gallinarum 287/91 provides insights into evolutionary and host adaptation pathways.</title>
        <authorList>
            <person name="Thomson N.R."/>
            <person name="Clayton D.J."/>
            <person name="Windhorst D."/>
            <person name="Vernikos G."/>
            <person name="Davidson S."/>
            <person name="Churcher C."/>
            <person name="Quail M.A."/>
            <person name="Stevens M."/>
            <person name="Jones M.A."/>
            <person name="Watson M."/>
            <person name="Barron A."/>
            <person name="Layton A."/>
            <person name="Pickard D."/>
            <person name="Kingsley R.A."/>
            <person name="Bignell A."/>
            <person name="Clark L."/>
            <person name="Harris B."/>
            <person name="Ormond D."/>
            <person name="Abdellah Z."/>
            <person name="Brooks K."/>
            <person name="Cherevach I."/>
            <person name="Chillingworth T."/>
            <person name="Woodward J."/>
            <person name="Norberczak H."/>
            <person name="Lord A."/>
            <person name="Arrowsmith C."/>
            <person name="Jagels K."/>
            <person name="Moule S."/>
            <person name="Mungall K."/>
            <person name="Saunders M."/>
            <person name="Whitehead S."/>
            <person name="Chabalgoity J.A."/>
            <person name="Maskell D."/>
            <person name="Humphreys T."/>
            <person name="Roberts M."/>
            <person name="Barrow P.A."/>
            <person name="Dougan G."/>
            <person name="Parkhill J."/>
        </authorList>
    </citation>
    <scope>NUCLEOTIDE SEQUENCE [LARGE SCALE GENOMIC DNA]</scope>
    <source>
        <strain>287/91 / NCTC 13346</strain>
    </source>
</reference>
<protein>
    <recommendedName>
        <fullName evidence="1">Chromosome partition protein MukB</fullName>
    </recommendedName>
    <alternativeName>
        <fullName evidence="1">Structural maintenance of chromosome-related protein</fullName>
    </alternativeName>
</protein>
<accession>B5R8L1</accession>